<comment type="function">
    <molecule>Helper component proteinase</molecule>
    <text evidence="2">Required for aphid transmission and also has proteolytic activity. Only cleaves a Gly-Gly dipeptide at its own C-terminus. Interacts with virions and aphid stylets. Acts as a suppressor of RNA-mediated gene silencing, also known as post-transcriptional gene silencing (PTGS), a mechanism of plant viral defense that limits the accumulation of viral RNAs. May have RNA-binding activity.</text>
</comment>
<comment type="function">
    <molecule>Movement protein P3N-PIPO</molecule>
    <text evidence="3">Allows efficient cell to cell propagation, by bypassing the host cell wall barrier. Transports viral genome to neighboring plant cells directly through plasmosdesmata, without any budding.</text>
</comment>
<comment type="catalytic activity">
    <molecule>Helper component proteinase</molecule>
    <reaction>
        <text>Hydrolyzes a Gly-|-Gly bond at its own C-terminus, commonly in the sequence -Tyr-Xaa-Val-Gly-|-Gly, in the processing of the potyviral polyprotein.</text>
        <dbReference type="EC" id="3.4.22.45"/>
    </reaction>
</comment>
<comment type="subunit">
    <molecule>Movement protein P3N-PIPO</molecule>
    <text evidence="3">Interacts (via PIPO domain) with host PCaP1 protein; this interaction may help to anchor the movement complex to the plasma membrane from which the complex could move to the plasmodesmata.</text>
</comment>
<comment type="subcellular location">
    <molecule>Movement protein P3N-PIPO</molecule>
    <subcellularLocation>
        <location evidence="3">Host cell junction</location>
        <location evidence="3">Host plasmodesma</location>
    </subcellularLocation>
</comment>
<comment type="alternative products">
    <event type="ribosomal frameshifting"/>
    <isoform>
        <id>P0CJ94-1</id>
        <name>P3N-PIPO polyprotein</name>
        <sequence type="displayed"/>
    </isoform>
    <isoform>
        <id>Q65399-1</id>
        <name>Genome polyprotein</name>
        <sequence type="external"/>
    </isoform>
</comment>
<comment type="domain">
    <text evidence="1">The N-terminus of helper component proteinase is involved in interaction with stylets. The central part is involved in interaction with virions and the C-terminus is involved in cell-to cell movement of the virus (By similarity).</text>
</comment>
<comment type="PTM">
    <text evidence="1">Potyviral RNA is expressed as two polyproteins which undergo post-translational proteolytic processing. Genome polyprotein is processed by NIa-pro, P1 and HC-pro proteinases resulting in the production of at least ten individual proteins. P3N-PIPO is cleaved by P1 and HC-pro proteinases resulting in the production of three individual proteins. The P1 proteinase and the HC-pro cleave only their respective C-termini autocatalytically (By similarity).</text>
</comment>
<comment type="miscellaneous">
    <molecule>Isoform P3N-PIPO polyprotein</molecule>
    <text>Produced by -1 ribosomal frameshifting in P3 ORF.</text>
</comment>
<comment type="similarity">
    <text evidence="7">Belongs to the potyviridae P3N-PIPO polyprotein family.</text>
</comment>
<reference key="1">
    <citation type="journal article" date="1995" name="Virus Res.">
        <title>The complete nucleotide sequence and genome organization of bean common mosaic virus (NL3 strain).</title>
        <authorList>
            <person name="Fang G.W."/>
            <person name="Allison R.F."/>
            <person name="Zambolim E.M."/>
            <person name="Maxwell D.P."/>
            <person name="Gilbertson R.L."/>
        </authorList>
    </citation>
    <scope>NUCLEOTIDE SEQUENCE [GENOMIC RNA]</scope>
    <source>
        <strain>Isolate Michigan</strain>
    </source>
</reference>
<reference key="2">
    <citation type="submission" date="2003-04" db="EMBL/GenBank/DDBJ databases">
        <title>Construction of a BCMNV-full length infectious clone.</title>
        <authorList>
            <person name="Calhoun C.L."/>
            <person name="Allison R.F."/>
        </authorList>
    </citation>
    <scope>NUCLEOTIDE SEQUENCE [MRNA]</scope>
    <source>
        <strain>Infectious clone Calhoun</strain>
    </source>
</reference>
<organismHost>
    <name type="scientific">Phaseolus vulgaris</name>
    <name type="common">Kidney bean</name>
    <name type="synonym">French bean</name>
    <dbReference type="NCBI Taxonomy" id="3885"/>
</organismHost>
<accession>P0CJ94</accession>
<proteinExistence type="evidence at transcript level"/>
<sequence length="999" mass="114541">MATIMFGSIAAEIPVIKEAIMIAMPKSKHTLHVVQVEAKHMATEIRSERGKLYVAKRFADNAIKAYDSQLKAFDELLKKNSDLQKRLFIGQNSPIKQKKGGACFVRSLSFKQAEERHAKYLKLQEEEHQFLSGAYGDKAYVGSVQGTLDRKVAEKVSFKSPYYKRTCKAVRQVKVLKKAVGSGKVLDQVLEIVAETGVPVTFVGKGANKTLRAQYVRRYGLVIPKIFLCHESGRKVHREMSYWHHKETLQYLCKHGKYGALNENALCKGDSGLLFDQRTAFVKRVTYLPHFIVRGRQEGQLVCATEYLDNVYTIEHYTHKPEEQFFKGWKQVFDKMAPHTFEHDCTIDYNNEQCGELAATICQTLFPVRKLSCNKCRHRIKDLSWEEFKQFILAHLGCCAKLWEEQKNLPGLEKIHSFVVQATSENMIFETSMEIVRLTQNYTSTHMLQIQDINKALMKGSSATQEDLKKASEQLLAMTRWWKNHMTLTNEDALKTFRNKRSSKALINPSLLCDNQLDRNGNFVWGERGRHSKRFFENFFEEVVPSEGYKKYVIRNNPNGFRKLAIDSLIVPMDLARARIALQGESIKREDLTLACVSKQDGNFVYPCCCVTQDDGRPFYSELKSPTKRHLVVGTSGDPKYIDLPATDSDRMYIAKEGYCYLNIFLAMLVNVNEDEAKDFTKMVRDVVVPKLGTWPSMMDVATAVYIMTVFHPETRSAELPRILVDHASQTMHVIDSFGSLSVGYHVLKAGTVNQLIQFASNDLEGEMKHYRVGGDAEQRMRCERALISSIFKPKKMMQILENDPYTLVLGLVSPTVLIHMFRMKHFEKGVELWINKDQSVVKIFLLLEHLTRKIAMNDVLLEQLEMISQQAGRLHEIICDCPKNIHSYRAVKDFLEVKMEAALTNKELANNGFFDINESLGHVSEKNLCKSLREGMARAKLVGKIFCNMAIEKVLKGYGRAFDKESCRRQKRIFKKICECVLHECPNTPRKCTYYNFK</sequence>
<organism>
    <name type="scientific">Bean common mosaic necrosis virus (strain NL-3)</name>
    <name type="common">BCMNV</name>
    <name type="synonym">Bean common mosaic virus serotype A (strain NL-3)</name>
    <dbReference type="NCBI Taxonomy" id="500578"/>
    <lineage>
        <taxon>Viruses</taxon>
        <taxon>Riboviria</taxon>
        <taxon>Orthornavirae</taxon>
        <taxon>Pisuviricota</taxon>
        <taxon>Stelpaviricetes</taxon>
        <taxon>Patatavirales</taxon>
        <taxon>Potyviridae</taxon>
        <taxon>Potyvirus</taxon>
        <taxon>Potyvirus phaseoli</taxon>
        <taxon>Bean common mosaic necrosis virus</taxon>
    </lineage>
</organism>
<name>MVP_BCMNN</name>
<feature type="chain" id="PRO_0000420045" description="P3N-PIPO polyprotein">
    <location>
        <begin position="1"/>
        <end position="999"/>
    </location>
</feature>
<feature type="chain" id="PRO_0000420046" description="P1 protease" evidence="4">
    <location>
        <begin position="1"/>
        <end position="317"/>
    </location>
</feature>
<feature type="chain" id="PRO_0000420047" description="Helper component proteinase" evidence="4">
    <location>
        <begin position="318"/>
        <end position="774"/>
    </location>
</feature>
<feature type="chain" id="PRO_0000408537" description="Movement protein P3N-PIPO">
    <location>
        <begin position="775"/>
        <end position="999"/>
    </location>
</feature>
<feature type="domain" description="Peptidase S30" evidence="6">
    <location>
        <begin position="176"/>
        <end position="317"/>
    </location>
</feature>
<feature type="domain" description="Peptidase C6" evidence="5">
    <location>
        <begin position="652"/>
        <end position="774"/>
    </location>
</feature>
<feature type="short sequence motif" description="Involved in interaction with stylet and aphid transmission" evidence="1">
    <location>
        <begin position="370"/>
        <end position="373"/>
    </location>
</feature>
<feature type="short sequence motif" description="Involved in virions binding and aphid transmission" evidence="1">
    <location>
        <begin position="626"/>
        <end position="628"/>
    </location>
</feature>
<feature type="active site" description="For P1 proteinase activity" evidence="6">
    <location>
        <position position="230"/>
    </location>
</feature>
<feature type="active site" description="For P1 proteinase activity" evidence="6">
    <location>
        <position position="239"/>
    </location>
</feature>
<feature type="active site" description="For P1 proteinase activity" evidence="6">
    <location>
        <position position="271"/>
    </location>
</feature>
<feature type="active site" description="For helper component proteinase activity" evidence="5">
    <location>
        <position position="660"/>
    </location>
</feature>
<feature type="active site" description="For helper component proteinase activity" evidence="5">
    <location>
        <position position="733"/>
    </location>
</feature>
<feature type="site" description="Cleavage; by P1 proteinase" evidence="6">
    <location>
        <begin position="317"/>
        <end position="318"/>
    </location>
</feature>
<feature type="site" description="Cleavage; by autolysis" evidence="5">
    <location>
        <begin position="774"/>
        <end position="775"/>
    </location>
</feature>
<feature type="unsure residue">
    <location>
        <begin position="925"/>
        <end position="931"/>
    </location>
</feature>
<dbReference type="EC" id="3.4.21.-"/>
<dbReference type="EC" id="3.4.22.45"/>
<dbReference type="EMBL" id="U19287">
    <property type="status" value="NOT_ANNOTATED_CDS"/>
    <property type="molecule type" value="Genomic_RNA"/>
</dbReference>
<dbReference type="EMBL" id="AY282577">
    <property type="status" value="NOT_ANNOTATED_CDS"/>
    <property type="molecule type" value="mRNA"/>
</dbReference>
<dbReference type="SMR" id="P0CJ94"/>
<dbReference type="Proteomes" id="UP000007452">
    <property type="component" value="Segment"/>
</dbReference>
<dbReference type="GO" id="GO:0044219">
    <property type="term" value="C:host cell plasmodesma"/>
    <property type="evidence" value="ECO:0007669"/>
    <property type="project" value="UniProtKB-SubCell"/>
</dbReference>
<dbReference type="GO" id="GO:0004197">
    <property type="term" value="F:cysteine-type endopeptidase activity"/>
    <property type="evidence" value="ECO:0007669"/>
    <property type="project" value="InterPro"/>
</dbReference>
<dbReference type="GO" id="GO:0008236">
    <property type="term" value="F:serine-type peptidase activity"/>
    <property type="evidence" value="ECO:0007669"/>
    <property type="project" value="UniProtKB-KW"/>
</dbReference>
<dbReference type="GO" id="GO:0006508">
    <property type="term" value="P:proteolysis"/>
    <property type="evidence" value="ECO:0007669"/>
    <property type="project" value="UniProtKB-KW"/>
</dbReference>
<dbReference type="GO" id="GO:0052170">
    <property type="term" value="P:symbiont-mediated suppression of host innate immune response"/>
    <property type="evidence" value="ECO:0007669"/>
    <property type="project" value="UniProtKB-KW"/>
</dbReference>
<dbReference type="GO" id="GO:0046740">
    <property type="term" value="P:transport of virus in host, cell to cell"/>
    <property type="evidence" value="ECO:0007669"/>
    <property type="project" value="UniProtKB-KW"/>
</dbReference>
<dbReference type="GO" id="GO:0075523">
    <property type="term" value="P:viral translational frameshifting"/>
    <property type="evidence" value="ECO:0007669"/>
    <property type="project" value="UniProtKB-KW"/>
</dbReference>
<dbReference type="Gene3D" id="3.90.70.150">
    <property type="entry name" value="Helper component proteinase"/>
    <property type="match status" value="1"/>
</dbReference>
<dbReference type="InterPro" id="IPR001456">
    <property type="entry name" value="HC-pro"/>
</dbReference>
<dbReference type="InterPro" id="IPR031159">
    <property type="entry name" value="HC_PRO_CPD_dom"/>
</dbReference>
<dbReference type="InterPro" id="IPR042308">
    <property type="entry name" value="HC_PRO_CPD_sf"/>
</dbReference>
<dbReference type="InterPro" id="IPR002540">
    <property type="entry name" value="Pept_S30_P1_potyvir"/>
</dbReference>
<dbReference type="InterPro" id="IPR039560">
    <property type="entry name" value="Potyvirid-P3"/>
</dbReference>
<dbReference type="Pfam" id="PF00851">
    <property type="entry name" value="Peptidase_C6"/>
    <property type="match status" value="1"/>
</dbReference>
<dbReference type="Pfam" id="PF01577">
    <property type="entry name" value="Peptidase_S30"/>
    <property type="match status" value="1"/>
</dbReference>
<dbReference type="Pfam" id="PF13608">
    <property type="entry name" value="Potyvirid-P3"/>
    <property type="match status" value="1"/>
</dbReference>
<dbReference type="PROSITE" id="PS51744">
    <property type="entry name" value="HC_PRO_CPD"/>
    <property type="match status" value="1"/>
</dbReference>
<dbReference type="PROSITE" id="PS51871">
    <property type="entry name" value="PV_P1_PRO"/>
    <property type="match status" value="1"/>
</dbReference>
<evidence type="ECO:0000250" key="1"/>
<evidence type="ECO:0000250" key="2">
    <source>
        <dbReference type="UniProtKB" id="P04517"/>
    </source>
</evidence>
<evidence type="ECO:0000250" key="3">
    <source>
        <dbReference type="UniProtKB" id="P0CK11"/>
    </source>
</evidence>
<evidence type="ECO:0000255" key="4"/>
<evidence type="ECO:0000255" key="5">
    <source>
        <dbReference type="PROSITE-ProRule" id="PRU01080"/>
    </source>
</evidence>
<evidence type="ECO:0000255" key="6">
    <source>
        <dbReference type="PROSITE-ProRule" id="PRU01219"/>
    </source>
</evidence>
<evidence type="ECO:0000305" key="7"/>
<protein>
    <recommendedName>
        <fullName>P3N-PIPO polyprotein</fullName>
    </recommendedName>
    <component>
        <recommendedName>
            <fullName>P1 protease</fullName>
            <ecNumber>3.4.21.-</ecNumber>
        </recommendedName>
        <alternativeName>
            <fullName>N-terminal protein</fullName>
        </alternativeName>
        <alternativeName>
            <fullName>P1 proteinase</fullName>
        </alternativeName>
    </component>
    <component>
        <recommendedName>
            <fullName>Helper component proteinase</fullName>
            <shortName>HC-pro</shortName>
            <ecNumber>3.4.22.45</ecNumber>
        </recommendedName>
    </component>
    <component>
        <recommendedName>
            <fullName>Movement protein P3N-PIPO</fullName>
        </recommendedName>
        <alternativeName>
            <fullName>Pretty interesting potyviridae ORF</fullName>
            <shortName>PIPO</shortName>
        </alternativeName>
    </component>
</protein>
<keyword id="KW-1031">Host cell junction</keyword>
<keyword id="KW-0945">Host-virus interaction</keyword>
<keyword id="KW-0378">Hydrolase</keyword>
<keyword id="KW-1090">Inhibition of host innate immune response by virus</keyword>
<keyword id="KW-0645">Protease</keyword>
<keyword id="KW-0688">Ribosomal frameshifting</keyword>
<keyword id="KW-0720">Serine protease</keyword>
<keyword id="KW-0941">Suppressor of RNA silencing</keyword>
<keyword id="KW-0813">Transport</keyword>
<keyword id="KW-0899">Viral immunoevasion</keyword>
<keyword id="KW-0916">Viral movement protein</keyword>